<evidence type="ECO:0000255" key="1">
    <source>
        <dbReference type="HAMAP-Rule" id="MF_00459"/>
    </source>
</evidence>
<protein>
    <recommendedName>
        <fullName evidence="1">Ion-translocating oxidoreductase complex subunit A</fullName>
        <ecNumber evidence="1">7.-.-.-</ecNumber>
    </recommendedName>
    <alternativeName>
        <fullName evidence="1">Rsx electron transport complex subunit A</fullName>
    </alternativeName>
</protein>
<sequence length="193" mass="20898">MTDYLLLFVGTVLVNNFVLVKFLGLCPFMGVSKKLETAMGMGLATTFVMTLASICAWLIDTWILIPLNLIYLRTLAFILVIAVVVQFTEMVVRKTSPVLYRLLGIFLPLITTNCAVLGVALLNINLGHNFLQSALYGFSAAVGFSLVMVLFAAIRERLAVADVPAPFRGNAIALITAGLMSLAFMGFSGLVKL</sequence>
<reference key="1">
    <citation type="journal article" date="2008" name="J. Bacteriol.">
        <title>The complete genome sequence of Escherichia coli DH10B: insights into the biology of a laboratory workhorse.</title>
        <authorList>
            <person name="Durfee T."/>
            <person name="Nelson R."/>
            <person name="Baldwin S."/>
            <person name="Plunkett G. III"/>
            <person name="Burland V."/>
            <person name="Mau B."/>
            <person name="Petrosino J.F."/>
            <person name="Qin X."/>
            <person name="Muzny D.M."/>
            <person name="Ayele M."/>
            <person name="Gibbs R.A."/>
            <person name="Csorgo B."/>
            <person name="Posfai G."/>
            <person name="Weinstock G.M."/>
            <person name="Blattner F.R."/>
        </authorList>
    </citation>
    <scope>NUCLEOTIDE SEQUENCE [LARGE SCALE GENOMIC DNA]</scope>
    <source>
        <strain>K12 / DH10B</strain>
    </source>
</reference>
<accession>B1XF92</accession>
<dbReference type="EC" id="7.-.-.-" evidence="1"/>
<dbReference type="EMBL" id="CP000948">
    <property type="protein sequence ID" value="ACB02833.1"/>
    <property type="molecule type" value="Genomic_DNA"/>
</dbReference>
<dbReference type="RefSeq" id="WP_000133193.1">
    <property type="nucleotide sequence ID" value="NC_010473.1"/>
</dbReference>
<dbReference type="SMR" id="B1XF92"/>
<dbReference type="GeneID" id="89516393"/>
<dbReference type="KEGG" id="ecd:ECDH10B_1761"/>
<dbReference type="HOGENOM" id="CLU_095255_1_0_6"/>
<dbReference type="GO" id="GO:0005886">
    <property type="term" value="C:plasma membrane"/>
    <property type="evidence" value="ECO:0007669"/>
    <property type="project" value="UniProtKB-SubCell"/>
</dbReference>
<dbReference type="GO" id="GO:0022900">
    <property type="term" value="P:electron transport chain"/>
    <property type="evidence" value="ECO:0007669"/>
    <property type="project" value="UniProtKB-UniRule"/>
</dbReference>
<dbReference type="HAMAP" id="MF_00459">
    <property type="entry name" value="RsxA_RnfA"/>
    <property type="match status" value="1"/>
</dbReference>
<dbReference type="InterPro" id="IPR011293">
    <property type="entry name" value="Ion_transpt_RnfA/RsxA"/>
</dbReference>
<dbReference type="InterPro" id="IPR003667">
    <property type="entry name" value="NqrDE/RnfAE"/>
</dbReference>
<dbReference type="InterPro" id="IPR050133">
    <property type="entry name" value="NqrDE/RnfAE_oxidrdctase"/>
</dbReference>
<dbReference type="NCBIfam" id="NF003481">
    <property type="entry name" value="PRK05151.1"/>
    <property type="match status" value="1"/>
</dbReference>
<dbReference type="NCBIfam" id="TIGR01943">
    <property type="entry name" value="rnfA"/>
    <property type="match status" value="1"/>
</dbReference>
<dbReference type="PANTHER" id="PTHR30335">
    <property type="entry name" value="INTEGRAL MEMBRANE PROTEIN OF SOXR-REDUCING COMPLEX"/>
    <property type="match status" value="1"/>
</dbReference>
<dbReference type="PANTHER" id="PTHR30335:SF0">
    <property type="entry name" value="ION-TRANSLOCATING OXIDOREDUCTASE COMPLEX SUBUNIT A"/>
    <property type="match status" value="1"/>
</dbReference>
<dbReference type="Pfam" id="PF02508">
    <property type="entry name" value="Rnf-Nqr"/>
    <property type="match status" value="1"/>
</dbReference>
<dbReference type="PIRSF" id="PIRSF006102">
    <property type="entry name" value="NQR_DE"/>
    <property type="match status" value="1"/>
</dbReference>
<name>RSXA_ECODH</name>
<keyword id="KW-0997">Cell inner membrane</keyword>
<keyword id="KW-1003">Cell membrane</keyword>
<keyword id="KW-0249">Electron transport</keyword>
<keyword id="KW-0472">Membrane</keyword>
<keyword id="KW-1278">Translocase</keyword>
<keyword id="KW-0812">Transmembrane</keyword>
<keyword id="KW-1133">Transmembrane helix</keyword>
<keyword id="KW-0813">Transport</keyword>
<gene>
    <name evidence="1" type="primary">rsxA</name>
    <name type="ordered locus">ECDH10B_1761</name>
</gene>
<proteinExistence type="inferred from homology"/>
<organism>
    <name type="scientific">Escherichia coli (strain K12 / DH10B)</name>
    <dbReference type="NCBI Taxonomy" id="316385"/>
    <lineage>
        <taxon>Bacteria</taxon>
        <taxon>Pseudomonadati</taxon>
        <taxon>Pseudomonadota</taxon>
        <taxon>Gammaproteobacteria</taxon>
        <taxon>Enterobacterales</taxon>
        <taxon>Enterobacteriaceae</taxon>
        <taxon>Escherichia</taxon>
    </lineage>
</organism>
<feature type="chain" id="PRO_1000191715" description="Ion-translocating oxidoreductase complex subunit A">
    <location>
        <begin position="1"/>
        <end position="193"/>
    </location>
</feature>
<feature type="transmembrane region" description="Helical" evidence="1">
    <location>
        <begin position="5"/>
        <end position="25"/>
    </location>
</feature>
<feature type="transmembrane region" description="Helical" evidence="1">
    <location>
        <begin position="39"/>
        <end position="59"/>
    </location>
</feature>
<feature type="transmembrane region" description="Helical" evidence="1">
    <location>
        <begin position="63"/>
        <end position="83"/>
    </location>
</feature>
<feature type="transmembrane region" description="Helical" evidence="1">
    <location>
        <begin position="102"/>
        <end position="122"/>
    </location>
</feature>
<feature type="transmembrane region" description="Helical" evidence="1">
    <location>
        <begin position="134"/>
        <end position="154"/>
    </location>
</feature>
<feature type="transmembrane region" description="Helical" evidence="1">
    <location>
        <begin position="171"/>
        <end position="191"/>
    </location>
</feature>
<comment type="function">
    <text evidence="1">Part of a membrane-bound complex that couples electron transfer with translocation of ions across the membrane. Required to maintain the reduced state of SoxR.</text>
</comment>
<comment type="subunit">
    <text evidence="1">The complex is composed of six subunits: RsxA, RsxB, RsxC, RsxD, RsxE and RsxG.</text>
</comment>
<comment type="subcellular location">
    <subcellularLocation>
        <location evidence="1">Cell inner membrane</location>
        <topology evidence="1">Multi-pass membrane protein</topology>
    </subcellularLocation>
</comment>
<comment type="similarity">
    <text evidence="1">Belongs to the NqrDE/RnfAE family.</text>
</comment>